<name>RIHC_SALNS</name>
<evidence type="ECO:0000255" key="1">
    <source>
        <dbReference type="HAMAP-Rule" id="MF_01432"/>
    </source>
</evidence>
<reference key="1">
    <citation type="journal article" date="2011" name="J. Bacteriol.">
        <title>Comparative genomics of 28 Salmonella enterica isolates: evidence for CRISPR-mediated adaptive sublineage evolution.</title>
        <authorList>
            <person name="Fricke W.F."/>
            <person name="Mammel M.K."/>
            <person name="McDermott P.F."/>
            <person name="Tartera C."/>
            <person name="White D.G."/>
            <person name="Leclerc J.E."/>
            <person name="Ravel J."/>
            <person name="Cebula T.A."/>
        </authorList>
    </citation>
    <scope>NUCLEOTIDE SEQUENCE [LARGE SCALE GENOMIC DNA]</scope>
    <source>
        <strain>SL254</strain>
    </source>
</reference>
<gene>
    <name evidence="1" type="primary">rihC</name>
    <name type="ordered locus">SNSL254_A0056</name>
</gene>
<accession>B4T6H8</accession>
<protein>
    <recommendedName>
        <fullName evidence="1">Non-specific ribonucleoside hydrolase RihC</fullName>
        <ecNumber evidence="1">3.2.-.-</ecNumber>
    </recommendedName>
    <alternativeName>
        <fullName evidence="1">Purine/pyrimidine ribonucleoside hydrolase</fullName>
    </alternativeName>
</protein>
<feature type="chain" id="PRO_1000145823" description="Non-specific ribonucleoside hydrolase RihC">
    <location>
        <begin position="1"/>
        <end position="306"/>
    </location>
</feature>
<feature type="active site" evidence="1">
    <location>
        <position position="235"/>
    </location>
</feature>
<proteinExistence type="inferred from homology"/>
<comment type="function">
    <text evidence="1">Hydrolyzes both purine and pyrimidine ribonucleosides with a broad-substrate specificity.</text>
</comment>
<comment type="similarity">
    <text evidence="1">Belongs to the IUNH family. RihC subfamily.</text>
</comment>
<organism>
    <name type="scientific">Salmonella newport (strain SL254)</name>
    <dbReference type="NCBI Taxonomy" id="423368"/>
    <lineage>
        <taxon>Bacteria</taxon>
        <taxon>Pseudomonadati</taxon>
        <taxon>Pseudomonadota</taxon>
        <taxon>Gammaproteobacteria</taxon>
        <taxon>Enterobacterales</taxon>
        <taxon>Enterobacteriaceae</taxon>
        <taxon>Salmonella</taxon>
    </lineage>
</organism>
<dbReference type="EC" id="3.2.-.-" evidence="1"/>
<dbReference type="EMBL" id="CP001113">
    <property type="protein sequence ID" value="ACF64673.1"/>
    <property type="molecule type" value="Genomic_DNA"/>
</dbReference>
<dbReference type="RefSeq" id="WP_000127283.1">
    <property type="nucleotide sequence ID" value="NZ_CCMR01000003.1"/>
</dbReference>
<dbReference type="SMR" id="B4T6H8"/>
<dbReference type="KEGG" id="see:SNSL254_A0056"/>
<dbReference type="HOGENOM" id="CLU_036838_2_2_6"/>
<dbReference type="Proteomes" id="UP000008824">
    <property type="component" value="Chromosome"/>
</dbReference>
<dbReference type="GO" id="GO:0005829">
    <property type="term" value="C:cytosol"/>
    <property type="evidence" value="ECO:0007669"/>
    <property type="project" value="TreeGrafter"/>
</dbReference>
<dbReference type="GO" id="GO:0008477">
    <property type="term" value="F:purine nucleosidase activity"/>
    <property type="evidence" value="ECO:0007669"/>
    <property type="project" value="TreeGrafter"/>
</dbReference>
<dbReference type="GO" id="GO:0006144">
    <property type="term" value="P:purine nucleobase metabolic process"/>
    <property type="evidence" value="ECO:0007669"/>
    <property type="project" value="UniProtKB-UniRule"/>
</dbReference>
<dbReference type="GO" id="GO:0006152">
    <property type="term" value="P:purine nucleoside catabolic process"/>
    <property type="evidence" value="ECO:0007669"/>
    <property type="project" value="TreeGrafter"/>
</dbReference>
<dbReference type="GO" id="GO:0006206">
    <property type="term" value="P:pyrimidine nucleobase metabolic process"/>
    <property type="evidence" value="ECO:0007669"/>
    <property type="project" value="UniProtKB-UniRule"/>
</dbReference>
<dbReference type="CDD" id="cd02651">
    <property type="entry name" value="nuc_hydro_IU_UC_XIUA"/>
    <property type="match status" value="1"/>
</dbReference>
<dbReference type="FunFam" id="3.90.245.10:FF:000002">
    <property type="entry name" value="Non-specific ribonucleoside hydrolase RihC"/>
    <property type="match status" value="1"/>
</dbReference>
<dbReference type="Gene3D" id="3.90.245.10">
    <property type="entry name" value="Ribonucleoside hydrolase-like"/>
    <property type="match status" value="1"/>
</dbReference>
<dbReference type="HAMAP" id="MF_01432">
    <property type="entry name" value="Nucleosid_hydro_RihC"/>
    <property type="match status" value="1"/>
</dbReference>
<dbReference type="InterPro" id="IPR001910">
    <property type="entry name" value="Inosine/uridine_hydrolase_dom"/>
</dbReference>
<dbReference type="InterPro" id="IPR023186">
    <property type="entry name" value="IUNH"/>
</dbReference>
<dbReference type="InterPro" id="IPR022976">
    <property type="entry name" value="Nucleosid_hydro_RihC_nonspecif"/>
</dbReference>
<dbReference type="InterPro" id="IPR036452">
    <property type="entry name" value="Ribo_hydro-like"/>
</dbReference>
<dbReference type="NCBIfam" id="NF008036">
    <property type="entry name" value="PRK10768.1"/>
    <property type="match status" value="1"/>
</dbReference>
<dbReference type="PANTHER" id="PTHR12304">
    <property type="entry name" value="INOSINE-URIDINE PREFERRING NUCLEOSIDE HYDROLASE"/>
    <property type="match status" value="1"/>
</dbReference>
<dbReference type="PANTHER" id="PTHR12304:SF15">
    <property type="entry name" value="NON-SPECIFIC RIBONUCLEOSIDE HYDROLASE RIHC"/>
    <property type="match status" value="1"/>
</dbReference>
<dbReference type="Pfam" id="PF01156">
    <property type="entry name" value="IU_nuc_hydro"/>
    <property type="match status" value="1"/>
</dbReference>
<dbReference type="SUPFAM" id="SSF53590">
    <property type="entry name" value="Nucleoside hydrolase"/>
    <property type="match status" value="1"/>
</dbReference>
<keyword id="KW-0326">Glycosidase</keyword>
<keyword id="KW-0378">Hydrolase</keyword>
<sequence>MTASLHIILDTDPGIDDAAAIAAALFAPQLDLQLITTVAGNVSVEKTTRNALQLLHFWNSDIPLAQGAATPLLRPLRDAAYVHGESGMEGYDFVDHQRQPLAKPAFIAIRDVLMNAPEPMTLVAIGPLTNIALLLMHYPECACNIRRLVLMGGSAGRGNFTPNAEFNIAVDPEAAALVFRSGLEIVMCGLDVTNQAMLSPDFLNKLPALNRTGKMLHSLFNHYRSGSMRTGVRMHDLCAIAWLVRPELFTLQSCFVAVETQGQYTAGTTVVDIEGRLGQPANAQVALALDVDGFRQWVAEVFAYAP</sequence>